<keyword id="KW-0030">Aminoacyl-tRNA synthetase</keyword>
<keyword id="KW-0067">ATP-binding</keyword>
<keyword id="KW-0963">Cytoplasm</keyword>
<keyword id="KW-0436">Ligase</keyword>
<keyword id="KW-0547">Nucleotide-binding</keyword>
<keyword id="KW-0648">Protein biosynthesis</keyword>
<keyword id="KW-1185">Reference proteome</keyword>
<name>SYP_CAUVN</name>
<organism>
    <name type="scientific">Caulobacter vibrioides (strain NA1000 / CB15N)</name>
    <name type="common">Caulobacter crescentus</name>
    <dbReference type="NCBI Taxonomy" id="565050"/>
    <lineage>
        <taxon>Bacteria</taxon>
        <taxon>Pseudomonadati</taxon>
        <taxon>Pseudomonadota</taxon>
        <taxon>Alphaproteobacteria</taxon>
        <taxon>Caulobacterales</taxon>
        <taxon>Caulobacteraceae</taxon>
        <taxon>Caulobacter</taxon>
    </lineage>
</organism>
<reference key="1">
    <citation type="journal article" date="2010" name="J. Bacteriol.">
        <title>The genetic basis of laboratory adaptation in Caulobacter crescentus.</title>
        <authorList>
            <person name="Marks M.E."/>
            <person name="Castro-Rojas C.M."/>
            <person name="Teiling C."/>
            <person name="Du L."/>
            <person name="Kapatral V."/>
            <person name="Walunas T.L."/>
            <person name="Crosson S."/>
        </authorList>
    </citation>
    <scope>NUCLEOTIDE SEQUENCE [LARGE SCALE GENOMIC DNA]</scope>
    <source>
        <strain>NA1000 / CB15N</strain>
    </source>
</reference>
<comment type="function">
    <text evidence="1">Catalyzes the attachment of proline to tRNA(Pro) in a two-step reaction: proline is first activated by ATP to form Pro-AMP and then transferred to the acceptor end of tRNA(Pro).</text>
</comment>
<comment type="catalytic activity">
    <reaction evidence="1">
        <text>tRNA(Pro) + L-proline + ATP = L-prolyl-tRNA(Pro) + AMP + diphosphate</text>
        <dbReference type="Rhea" id="RHEA:14305"/>
        <dbReference type="Rhea" id="RHEA-COMP:9700"/>
        <dbReference type="Rhea" id="RHEA-COMP:9702"/>
        <dbReference type="ChEBI" id="CHEBI:30616"/>
        <dbReference type="ChEBI" id="CHEBI:33019"/>
        <dbReference type="ChEBI" id="CHEBI:60039"/>
        <dbReference type="ChEBI" id="CHEBI:78442"/>
        <dbReference type="ChEBI" id="CHEBI:78532"/>
        <dbReference type="ChEBI" id="CHEBI:456215"/>
        <dbReference type="EC" id="6.1.1.15"/>
    </reaction>
</comment>
<comment type="subunit">
    <text evidence="1">Homodimer.</text>
</comment>
<comment type="subcellular location">
    <subcellularLocation>
        <location evidence="1">Cytoplasm</location>
    </subcellularLocation>
</comment>
<comment type="similarity">
    <text evidence="1">Belongs to the class-II aminoacyl-tRNA synthetase family. ProS type 2 subfamily.</text>
</comment>
<accession>B8GWT1</accession>
<feature type="chain" id="PRO_1000185524" description="Proline--tRNA ligase">
    <location>
        <begin position="1"/>
        <end position="443"/>
    </location>
</feature>
<evidence type="ECO:0000255" key="1">
    <source>
        <dbReference type="HAMAP-Rule" id="MF_01570"/>
    </source>
</evidence>
<sequence>MRSSRYFLPVLKEAPSDAQIVSHQLMLRAGMIRQEAAGIYAWLPLGLRVLNKIEQIVREEMDRAGAIELLMPTIQLADLWRESGRYDDYGDEMLRITDRHKRELLFGPTAEEVVTDIFRASIKSYKDLPKNLYNIQWKFRDERRPRFGVMRGREFLMKDAYSFDLDADGARKSYNRMFVAYLNLFARMGLKAVPMRADTGPIGGDLSHEFIVLAETGESAVFCHKDLVEMPAPGPDLDWINGDLQPLVNQRTALYAATEEMHDEAAFNALPEGDRLSARGIEVGHIFSFGTKYSEPMKATVQGPDGQQVPVQMGSYGVGVSRLLGAIIEASHDEGGIIWPESVAPFDVGIVNMRQGDAACDAACETAYNALKAAGREVLYDDTDARGGAKFATMDLIGLPWQLIVGPKGIAEGVVEIKHRKTGERHTASLESVLDGLTKSKTT</sequence>
<dbReference type="EC" id="6.1.1.15" evidence="1"/>
<dbReference type="EMBL" id="CP001340">
    <property type="protein sequence ID" value="ACL95473.1"/>
    <property type="molecule type" value="Genomic_DNA"/>
</dbReference>
<dbReference type="RefSeq" id="WP_010919797.1">
    <property type="nucleotide sequence ID" value="NC_011916.1"/>
</dbReference>
<dbReference type="RefSeq" id="YP_002517381.1">
    <property type="nucleotide sequence ID" value="NC_011916.1"/>
</dbReference>
<dbReference type="SMR" id="B8GWT1"/>
<dbReference type="GeneID" id="7333336"/>
<dbReference type="KEGG" id="ccs:CCNA_02008"/>
<dbReference type="PATRIC" id="fig|565050.3.peg.1967"/>
<dbReference type="HOGENOM" id="CLU_016739_4_2_5"/>
<dbReference type="OrthoDB" id="9809052at2"/>
<dbReference type="PhylomeDB" id="B8GWT1"/>
<dbReference type="Proteomes" id="UP000001364">
    <property type="component" value="Chromosome"/>
</dbReference>
<dbReference type="GO" id="GO:0005829">
    <property type="term" value="C:cytosol"/>
    <property type="evidence" value="ECO:0007669"/>
    <property type="project" value="TreeGrafter"/>
</dbReference>
<dbReference type="GO" id="GO:0005524">
    <property type="term" value="F:ATP binding"/>
    <property type="evidence" value="ECO:0007669"/>
    <property type="project" value="UniProtKB-UniRule"/>
</dbReference>
<dbReference type="GO" id="GO:0004827">
    <property type="term" value="F:proline-tRNA ligase activity"/>
    <property type="evidence" value="ECO:0007669"/>
    <property type="project" value="UniProtKB-UniRule"/>
</dbReference>
<dbReference type="GO" id="GO:0006433">
    <property type="term" value="P:prolyl-tRNA aminoacylation"/>
    <property type="evidence" value="ECO:0007669"/>
    <property type="project" value="UniProtKB-UniRule"/>
</dbReference>
<dbReference type="CDD" id="cd00861">
    <property type="entry name" value="ProRS_anticodon_short"/>
    <property type="match status" value="1"/>
</dbReference>
<dbReference type="CDD" id="cd00779">
    <property type="entry name" value="ProRS_core_prok"/>
    <property type="match status" value="1"/>
</dbReference>
<dbReference type="FunFam" id="3.30.930.10:FF:000042">
    <property type="entry name" value="probable proline--tRNA ligase, mitochondrial"/>
    <property type="match status" value="1"/>
</dbReference>
<dbReference type="FunFam" id="3.40.50.800:FF:000032">
    <property type="entry name" value="Proline--tRNA ligase"/>
    <property type="match status" value="1"/>
</dbReference>
<dbReference type="Gene3D" id="3.40.50.800">
    <property type="entry name" value="Anticodon-binding domain"/>
    <property type="match status" value="1"/>
</dbReference>
<dbReference type="Gene3D" id="3.30.930.10">
    <property type="entry name" value="Bira Bifunctional Protein, Domain 2"/>
    <property type="match status" value="1"/>
</dbReference>
<dbReference type="HAMAP" id="MF_01570">
    <property type="entry name" value="Pro_tRNA_synth_type2"/>
    <property type="match status" value="1"/>
</dbReference>
<dbReference type="InterPro" id="IPR002314">
    <property type="entry name" value="aa-tRNA-synt_IIb"/>
</dbReference>
<dbReference type="InterPro" id="IPR006195">
    <property type="entry name" value="aa-tRNA-synth_II"/>
</dbReference>
<dbReference type="InterPro" id="IPR045864">
    <property type="entry name" value="aa-tRNA-synth_II/BPL/LPL"/>
</dbReference>
<dbReference type="InterPro" id="IPR004154">
    <property type="entry name" value="Anticodon-bd"/>
</dbReference>
<dbReference type="InterPro" id="IPR036621">
    <property type="entry name" value="Anticodon-bd_dom_sf"/>
</dbReference>
<dbReference type="InterPro" id="IPR002316">
    <property type="entry name" value="Pro-tRNA-ligase_IIa"/>
</dbReference>
<dbReference type="InterPro" id="IPR004500">
    <property type="entry name" value="Pro-tRNA-synth_IIa_bac-type"/>
</dbReference>
<dbReference type="InterPro" id="IPR050062">
    <property type="entry name" value="Pro-tRNA_synthetase"/>
</dbReference>
<dbReference type="InterPro" id="IPR023716">
    <property type="entry name" value="Prolyl-tRNA_ligase_IIa_type2"/>
</dbReference>
<dbReference type="InterPro" id="IPR044140">
    <property type="entry name" value="ProRS_anticodon_short"/>
</dbReference>
<dbReference type="InterPro" id="IPR033730">
    <property type="entry name" value="ProRS_core_prok"/>
</dbReference>
<dbReference type="NCBIfam" id="NF008979">
    <property type="entry name" value="PRK12325.1"/>
    <property type="match status" value="1"/>
</dbReference>
<dbReference type="NCBIfam" id="TIGR00409">
    <property type="entry name" value="proS_fam_II"/>
    <property type="match status" value="1"/>
</dbReference>
<dbReference type="PANTHER" id="PTHR42753">
    <property type="entry name" value="MITOCHONDRIAL RIBOSOME PROTEIN L39/PROLYL-TRNA LIGASE FAMILY MEMBER"/>
    <property type="match status" value="1"/>
</dbReference>
<dbReference type="PANTHER" id="PTHR42753:SF2">
    <property type="entry name" value="PROLINE--TRNA LIGASE"/>
    <property type="match status" value="1"/>
</dbReference>
<dbReference type="Pfam" id="PF03129">
    <property type="entry name" value="HGTP_anticodon"/>
    <property type="match status" value="1"/>
</dbReference>
<dbReference type="Pfam" id="PF00587">
    <property type="entry name" value="tRNA-synt_2b"/>
    <property type="match status" value="1"/>
</dbReference>
<dbReference type="PRINTS" id="PR01046">
    <property type="entry name" value="TRNASYNTHPRO"/>
</dbReference>
<dbReference type="SUPFAM" id="SSF52954">
    <property type="entry name" value="Class II aaRS ABD-related"/>
    <property type="match status" value="1"/>
</dbReference>
<dbReference type="SUPFAM" id="SSF55681">
    <property type="entry name" value="Class II aaRS and biotin synthetases"/>
    <property type="match status" value="1"/>
</dbReference>
<dbReference type="PROSITE" id="PS50862">
    <property type="entry name" value="AA_TRNA_LIGASE_II"/>
    <property type="match status" value="1"/>
</dbReference>
<proteinExistence type="inferred from homology"/>
<protein>
    <recommendedName>
        <fullName evidence="1">Proline--tRNA ligase</fullName>
        <ecNumber evidence="1">6.1.1.15</ecNumber>
    </recommendedName>
    <alternativeName>
        <fullName evidence="1">Prolyl-tRNA synthetase</fullName>
        <shortName evidence="1">ProRS</shortName>
    </alternativeName>
</protein>
<gene>
    <name evidence="1" type="primary">proS</name>
    <name type="ordered locus">CCNA_02008</name>
</gene>